<feature type="chain" id="PRO_1000089711" description="Recombination protein RecR">
    <location>
        <begin position="1"/>
        <end position="198"/>
    </location>
</feature>
<feature type="domain" description="Toprim" evidence="1">
    <location>
        <begin position="80"/>
        <end position="175"/>
    </location>
</feature>
<feature type="zinc finger region" description="C4-type" evidence="1">
    <location>
        <begin position="57"/>
        <end position="72"/>
    </location>
</feature>
<gene>
    <name evidence="1" type="primary">recR</name>
    <name type="ordered locus">Bphy_0953</name>
</gene>
<protein>
    <recommendedName>
        <fullName evidence="1">Recombination protein RecR</fullName>
    </recommendedName>
</protein>
<evidence type="ECO:0000255" key="1">
    <source>
        <dbReference type="HAMAP-Rule" id="MF_00017"/>
    </source>
</evidence>
<proteinExistence type="inferred from homology"/>
<organism>
    <name type="scientific">Paraburkholderia phymatum (strain DSM 17167 / CIP 108236 / LMG 21445 / STM815)</name>
    <name type="common">Burkholderia phymatum</name>
    <dbReference type="NCBI Taxonomy" id="391038"/>
    <lineage>
        <taxon>Bacteria</taxon>
        <taxon>Pseudomonadati</taxon>
        <taxon>Pseudomonadota</taxon>
        <taxon>Betaproteobacteria</taxon>
        <taxon>Burkholderiales</taxon>
        <taxon>Burkholderiaceae</taxon>
        <taxon>Paraburkholderia</taxon>
    </lineage>
</organism>
<reference key="1">
    <citation type="journal article" date="2014" name="Stand. Genomic Sci.">
        <title>Complete genome sequence of Burkholderia phymatum STM815(T), a broad host range and efficient nitrogen-fixing symbiont of Mimosa species.</title>
        <authorList>
            <person name="Moulin L."/>
            <person name="Klonowska A."/>
            <person name="Caroline B."/>
            <person name="Booth K."/>
            <person name="Vriezen J.A."/>
            <person name="Melkonian R."/>
            <person name="James E.K."/>
            <person name="Young J.P."/>
            <person name="Bena G."/>
            <person name="Hauser L."/>
            <person name="Land M."/>
            <person name="Kyrpides N."/>
            <person name="Bruce D."/>
            <person name="Chain P."/>
            <person name="Copeland A."/>
            <person name="Pitluck S."/>
            <person name="Woyke T."/>
            <person name="Lizotte-Waniewski M."/>
            <person name="Bristow J."/>
            <person name="Riley M."/>
        </authorList>
    </citation>
    <scope>NUCLEOTIDE SEQUENCE [LARGE SCALE GENOMIC DNA]</scope>
    <source>
        <strain>DSM 17167 / CIP 108236 / LMG 21445 / STM815</strain>
    </source>
</reference>
<accession>B2JG60</accession>
<keyword id="KW-0227">DNA damage</keyword>
<keyword id="KW-0233">DNA recombination</keyword>
<keyword id="KW-0234">DNA repair</keyword>
<keyword id="KW-0479">Metal-binding</keyword>
<keyword id="KW-1185">Reference proteome</keyword>
<keyword id="KW-0862">Zinc</keyword>
<keyword id="KW-0863">Zinc-finger</keyword>
<sequence length="198" mass="21838">MKQPSALSALVEALRALPGVGPKSAQRMAYHLMQHDREGAEKLGRSLLFATEHLQHCEKCNTFTEAQICEVCSDTERDPTLLCVVETPADQIMLEQTMTWRGLYFVLMGRLSPLDGIGPKEIHFDRLVKRATDGVVKEVVLATNFTNEGEATAHYLGQTLKSRGLSVTRLARGVPVGGELEYVDAGTIARAMLDRRSI</sequence>
<name>RECR_PARP8</name>
<comment type="function">
    <text evidence="1">May play a role in DNA repair. It seems to be involved in an RecBC-independent recombinational process of DNA repair. It may act with RecF and RecO.</text>
</comment>
<comment type="similarity">
    <text evidence="1">Belongs to the RecR family.</text>
</comment>
<dbReference type="EMBL" id="CP001043">
    <property type="protein sequence ID" value="ACC70142.1"/>
    <property type="molecule type" value="Genomic_DNA"/>
</dbReference>
<dbReference type="RefSeq" id="WP_012400359.1">
    <property type="nucleotide sequence ID" value="NC_010622.1"/>
</dbReference>
<dbReference type="SMR" id="B2JG60"/>
<dbReference type="STRING" id="391038.Bphy_0953"/>
<dbReference type="KEGG" id="bph:Bphy_0953"/>
<dbReference type="eggNOG" id="COG0353">
    <property type="taxonomic scope" value="Bacteria"/>
</dbReference>
<dbReference type="HOGENOM" id="CLU_060739_1_2_4"/>
<dbReference type="OrthoDB" id="9802672at2"/>
<dbReference type="Proteomes" id="UP000001192">
    <property type="component" value="Chromosome 1"/>
</dbReference>
<dbReference type="GO" id="GO:0003677">
    <property type="term" value="F:DNA binding"/>
    <property type="evidence" value="ECO:0007669"/>
    <property type="project" value="UniProtKB-UniRule"/>
</dbReference>
<dbReference type="GO" id="GO:0008270">
    <property type="term" value="F:zinc ion binding"/>
    <property type="evidence" value="ECO:0007669"/>
    <property type="project" value="UniProtKB-KW"/>
</dbReference>
<dbReference type="GO" id="GO:0006310">
    <property type="term" value="P:DNA recombination"/>
    <property type="evidence" value="ECO:0007669"/>
    <property type="project" value="UniProtKB-UniRule"/>
</dbReference>
<dbReference type="GO" id="GO:0006281">
    <property type="term" value="P:DNA repair"/>
    <property type="evidence" value="ECO:0007669"/>
    <property type="project" value="UniProtKB-UniRule"/>
</dbReference>
<dbReference type="CDD" id="cd01025">
    <property type="entry name" value="TOPRIM_recR"/>
    <property type="match status" value="1"/>
</dbReference>
<dbReference type="Gene3D" id="3.40.1360.10">
    <property type="match status" value="1"/>
</dbReference>
<dbReference type="Gene3D" id="6.10.250.240">
    <property type="match status" value="1"/>
</dbReference>
<dbReference type="Gene3D" id="1.10.8.420">
    <property type="entry name" value="RecR Domain 1"/>
    <property type="match status" value="1"/>
</dbReference>
<dbReference type="HAMAP" id="MF_00017">
    <property type="entry name" value="RecR"/>
    <property type="match status" value="1"/>
</dbReference>
<dbReference type="InterPro" id="IPR000093">
    <property type="entry name" value="DNA_Rcmb_RecR"/>
</dbReference>
<dbReference type="InterPro" id="IPR023627">
    <property type="entry name" value="Rcmb_RecR"/>
</dbReference>
<dbReference type="InterPro" id="IPR015967">
    <property type="entry name" value="Rcmb_RecR_Znf"/>
</dbReference>
<dbReference type="InterPro" id="IPR006171">
    <property type="entry name" value="TOPRIM_dom"/>
</dbReference>
<dbReference type="InterPro" id="IPR034137">
    <property type="entry name" value="TOPRIM_RecR"/>
</dbReference>
<dbReference type="NCBIfam" id="TIGR00615">
    <property type="entry name" value="recR"/>
    <property type="match status" value="1"/>
</dbReference>
<dbReference type="PANTHER" id="PTHR30446">
    <property type="entry name" value="RECOMBINATION PROTEIN RECR"/>
    <property type="match status" value="1"/>
</dbReference>
<dbReference type="PANTHER" id="PTHR30446:SF0">
    <property type="entry name" value="RECOMBINATION PROTEIN RECR"/>
    <property type="match status" value="1"/>
</dbReference>
<dbReference type="Pfam" id="PF21175">
    <property type="entry name" value="RecR_C"/>
    <property type="match status" value="1"/>
</dbReference>
<dbReference type="Pfam" id="PF21176">
    <property type="entry name" value="RecR_HhH"/>
    <property type="match status" value="1"/>
</dbReference>
<dbReference type="Pfam" id="PF02132">
    <property type="entry name" value="RecR_ZnF"/>
    <property type="match status" value="1"/>
</dbReference>
<dbReference type="Pfam" id="PF13662">
    <property type="entry name" value="Toprim_4"/>
    <property type="match status" value="1"/>
</dbReference>
<dbReference type="SMART" id="SM00493">
    <property type="entry name" value="TOPRIM"/>
    <property type="match status" value="1"/>
</dbReference>
<dbReference type="SUPFAM" id="SSF111304">
    <property type="entry name" value="Recombination protein RecR"/>
    <property type="match status" value="1"/>
</dbReference>
<dbReference type="PROSITE" id="PS01300">
    <property type="entry name" value="RECR"/>
    <property type="match status" value="1"/>
</dbReference>
<dbReference type="PROSITE" id="PS50880">
    <property type="entry name" value="TOPRIM"/>
    <property type="match status" value="1"/>
</dbReference>